<comment type="function">
    <text evidence="1">E1-like enzyme which activates UFM1.</text>
</comment>
<comment type="similarity">
    <text evidence="3">Belongs to the ubiquitin-activating E1 family. UBA5 subfamily.</text>
</comment>
<reference key="1">
    <citation type="journal article" date="2007" name="Nature">
        <title>Evolution of genes and genomes on the Drosophila phylogeny.</title>
        <authorList>
            <consortium name="Drosophila 12 genomes consortium"/>
        </authorList>
    </citation>
    <scope>NUCLEOTIDE SEQUENCE [LARGE SCALE GENOMIC DNA]</scope>
    <source>
        <strain>MSH-3 / Tucson 14011-0111.49</strain>
    </source>
</reference>
<gene>
    <name type="ORF">GL19893</name>
</gene>
<accession>B4GYC7</accession>
<keyword id="KW-0067">ATP-binding</keyword>
<keyword id="KW-0479">Metal-binding</keyword>
<keyword id="KW-0547">Nucleotide-binding</keyword>
<keyword id="KW-1185">Reference proteome</keyword>
<keyword id="KW-0833">Ubl conjugation pathway</keyword>
<keyword id="KW-0862">Zinc</keyword>
<name>UBA5_DROPE</name>
<feature type="chain" id="PRO_0000391946" description="Ubiquitin-like modifier-activating enzyme 5">
    <location>
        <begin position="1"/>
        <end position="384"/>
    </location>
</feature>
<feature type="region of interest" description="Disordered" evidence="2">
    <location>
        <begin position="352"/>
        <end position="375"/>
    </location>
</feature>
<feature type="active site" description="Glycyl thioester intermediate" evidence="1">
    <location>
        <position position="230"/>
    </location>
</feature>
<feature type="binding site" evidence="1">
    <location>
        <position position="63"/>
    </location>
    <ligand>
        <name>ATP</name>
        <dbReference type="ChEBI" id="CHEBI:30616"/>
    </ligand>
</feature>
<feature type="binding site" evidence="1">
    <location>
        <position position="84"/>
    </location>
    <ligand>
        <name>ATP</name>
        <dbReference type="ChEBI" id="CHEBI:30616"/>
    </ligand>
</feature>
<feature type="binding site" evidence="1">
    <location>
        <position position="107"/>
    </location>
    <ligand>
        <name>ATP</name>
        <dbReference type="ChEBI" id="CHEBI:30616"/>
    </ligand>
</feature>
<feature type="binding site" evidence="1">
    <location>
        <position position="130"/>
    </location>
    <ligand>
        <name>ATP</name>
        <dbReference type="ChEBI" id="CHEBI:30616"/>
    </ligand>
</feature>
<feature type="binding site" evidence="1">
    <location>
        <position position="164"/>
    </location>
    <ligand>
        <name>ATP</name>
        <dbReference type="ChEBI" id="CHEBI:30616"/>
    </ligand>
</feature>
<feature type="binding site" evidence="1">
    <location>
        <position position="206"/>
    </location>
    <ligand>
        <name>Zn(2+)</name>
        <dbReference type="ChEBI" id="CHEBI:29105"/>
    </ligand>
</feature>
<feature type="binding site" evidence="1">
    <location>
        <position position="209"/>
    </location>
    <ligand>
        <name>Zn(2+)</name>
        <dbReference type="ChEBI" id="CHEBI:29105"/>
    </ligand>
</feature>
<feature type="binding site" evidence="1">
    <location>
        <position position="283"/>
    </location>
    <ligand>
        <name>Zn(2+)</name>
        <dbReference type="ChEBI" id="CHEBI:29105"/>
    </ligand>
</feature>
<feature type="binding site" evidence="1">
    <location>
        <position position="288"/>
    </location>
    <ligand>
        <name>Zn(2+)</name>
        <dbReference type="ChEBI" id="CHEBI:29105"/>
    </ligand>
</feature>
<dbReference type="EMBL" id="CH479197">
    <property type="protein sequence ID" value="EDW27783.1"/>
    <property type="molecule type" value="Genomic_DNA"/>
</dbReference>
<dbReference type="RefSeq" id="XP_002023606.1">
    <property type="nucleotide sequence ID" value="XM_002023570.1"/>
</dbReference>
<dbReference type="SMR" id="B4GYC7"/>
<dbReference type="STRING" id="7234.B4GYC7"/>
<dbReference type="EnsemblMetazoa" id="FBtr0185508">
    <property type="protein sequence ID" value="FBpp0184000"/>
    <property type="gene ID" value="FBgn0157491"/>
</dbReference>
<dbReference type="eggNOG" id="KOG2336">
    <property type="taxonomic scope" value="Eukaryota"/>
</dbReference>
<dbReference type="HOGENOM" id="CLU_013325_0_1_1"/>
<dbReference type="OMA" id="MNIVKDY"/>
<dbReference type="OrthoDB" id="206053at2759"/>
<dbReference type="PhylomeDB" id="B4GYC7"/>
<dbReference type="Proteomes" id="UP000008744">
    <property type="component" value="Unassembled WGS sequence"/>
</dbReference>
<dbReference type="GO" id="GO:0005829">
    <property type="term" value="C:cytosol"/>
    <property type="evidence" value="ECO:0007669"/>
    <property type="project" value="TreeGrafter"/>
</dbReference>
<dbReference type="GO" id="GO:0005524">
    <property type="term" value="F:ATP binding"/>
    <property type="evidence" value="ECO:0007669"/>
    <property type="project" value="UniProtKB-KW"/>
</dbReference>
<dbReference type="GO" id="GO:0046872">
    <property type="term" value="F:metal ion binding"/>
    <property type="evidence" value="ECO:0007669"/>
    <property type="project" value="UniProtKB-KW"/>
</dbReference>
<dbReference type="GO" id="GO:0071566">
    <property type="term" value="F:UFM1 activating enzyme activity"/>
    <property type="evidence" value="ECO:0007669"/>
    <property type="project" value="TreeGrafter"/>
</dbReference>
<dbReference type="GO" id="GO:0071569">
    <property type="term" value="P:protein ufmylation"/>
    <property type="evidence" value="ECO:0007669"/>
    <property type="project" value="TreeGrafter"/>
</dbReference>
<dbReference type="CDD" id="cd00757">
    <property type="entry name" value="ThiF_MoeB_HesA_family"/>
    <property type="match status" value="1"/>
</dbReference>
<dbReference type="FunFam" id="3.40.50.720:FF:000066">
    <property type="entry name" value="Putative ubiquitin-like modifier-activating enzyme 5"/>
    <property type="match status" value="1"/>
</dbReference>
<dbReference type="Gene3D" id="3.40.50.720">
    <property type="entry name" value="NAD(P)-binding Rossmann-like Domain"/>
    <property type="match status" value="1"/>
</dbReference>
<dbReference type="InterPro" id="IPR029752">
    <property type="entry name" value="D-isomer_DH_CS1"/>
</dbReference>
<dbReference type="InterPro" id="IPR045886">
    <property type="entry name" value="ThiF/MoeB/HesA"/>
</dbReference>
<dbReference type="InterPro" id="IPR000594">
    <property type="entry name" value="ThiF_NAD_FAD-bd"/>
</dbReference>
<dbReference type="InterPro" id="IPR035985">
    <property type="entry name" value="Ubiquitin-activating_enz"/>
</dbReference>
<dbReference type="PANTHER" id="PTHR10953">
    <property type="entry name" value="UBIQUITIN-ACTIVATING ENZYME E1"/>
    <property type="match status" value="1"/>
</dbReference>
<dbReference type="PANTHER" id="PTHR10953:SF9">
    <property type="entry name" value="UBIQUITIN-LIKE MODIFIER-ACTIVATING ENZYME 5"/>
    <property type="match status" value="1"/>
</dbReference>
<dbReference type="Pfam" id="PF00899">
    <property type="entry name" value="ThiF"/>
    <property type="match status" value="1"/>
</dbReference>
<dbReference type="SUPFAM" id="SSF69572">
    <property type="entry name" value="Activating enzymes of the ubiquitin-like proteins"/>
    <property type="match status" value="1"/>
</dbReference>
<evidence type="ECO:0000250" key="1"/>
<evidence type="ECO:0000256" key="2">
    <source>
        <dbReference type="SAM" id="MobiDB-lite"/>
    </source>
</evidence>
<evidence type="ECO:0000305" key="3"/>
<sequence length="384" mass="42079">MTNAIDELQAIIAELKTEVEEQRAVIRQSRDRIEHMSAEVRMNIVKNYERIRDKTVAIVGVGGVGSVTADMLTRCGIGKLILFDYDKVELANMNRLFFTPDQAGLSKVEAAARTLTFINPDVRIETHNYNITTIDNFDNFLNTITGDGTVAGEPVDLVLSCVDNFEARMAINAACNEKCLNWFESGVSENAVSGHIQFLRPGDTACFACAPPLVVAENIDEKTLKREGVCAASLPTTMGITAGFLVQNALKYLLNFGEVSDYLGYNALNDFFPKMTLKPNPQCDDRNCLLRQKEFQARPKPVVVQEEAPTDEPLHASNDWGIELVAEDAPSNAPTDLSQSTDVGQGLRLAYEAPEKSSAEATQAATAPVDDTSLEDLMAQMKSM</sequence>
<proteinExistence type="inferred from homology"/>
<protein>
    <recommendedName>
        <fullName>Ubiquitin-like modifier-activating enzyme 5</fullName>
        <shortName>Ubiquitin-activating enzyme 5</shortName>
    </recommendedName>
</protein>
<organism>
    <name type="scientific">Drosophila persimilis</name>
    <name type="common">Fruit fly</name>
    <dbReference type="NCBI Taxonomy" id="7234"/>
    <lineage>
        <taxon>Eukaryota</taxon>
        <taxon>Metazoa</taxon>
        <taxon>Ecdysozoa</taxon>
        <taxon>Arthropoda</taxon>
        <taxon>Hexapoda</taxon>
        <taxon>Insecta</taxon>
        <taxon>Pterygota</taxon>
        <taxon>Neoptera</taxon>
        <taxon>Endopterygota</taxon>
        <taxon>Diptera</taxon>
        <taxon>Brachycera</taxon>
        <taxon>Muscomorpha</taxon>
        <taxon>Ephydroidea</taxon>
        <taxon>Drosophilidae</taxon>
        <taxon>Drosophila</taxon>
        <taxon>Sophophora</taxon>
    </lineage>
</organism>